<sequence>MKIISCIEELRDHLRGQLRTAFVPTMGNLHDGHLSLMRLARKHGDPVVASIFVNRLQFGPNEDFDKYPRTFQADVEKLEKEGVYILFAPTEKDLYPEPQEFRVRPPDDLGNTLEGEFRPGFFSGVTTVVLKLFSCVQPSVAVFGKKDYQQLMIVRNMSKQFALPTEIIAADTYRAEDGLALSSRNVYLSPAERAEAPALFQSLNSVANEVRSGHLDIFELERKAMADLSQRGWKPDYISIRKQSNLQPPSAGDMAQGEKLVVLAAAKLGVTRLIDNLEI</sequence>
<gene>
    <name evidence="1" type="primary">panC</name>
    <name type="ordered locus">mma_1105</name>
</gene>
<comment type="function">
    <text evidence="1">Catalyzes the condensation of pantoate with beta-alanine in an ATP-dependent reaction via a pantoyl-adenylate intermediate.</text>
</comment>
<comment type="catalytic activity">
    <reaction evidence="1">
        <text>(R)-pantoate + beta-alanine + ATP = (R)-pantothenate + AMP + diphosphate + H(+)</text>
        <dbReference type="Rhea" id="RHEA:10912"/>
        <dbReference type="ChEBI" id="CHEBI:15378"/>
        <dbReference type="ChEBI" id="CHEBI:15980"/>
        <dbReference type="ChEBI" id="CHEBI:29032"/>
        <dbReference type="ChEBI" id="CHEBI:30616"/>
        <dbReference type="ChEBI" id="CHEBI:33019"/>
        <dbReference type="ChEBI" id="CHEBI:57966"/>
        <dbReference type="ChEBI" id="CHEBI:456215"/>
        <dbReference type="EC" id="6.3.2.1"/>
    </reaction>
</comment>
<comment type="pathway">
    <text evidence="1">Cofactor biosynthesis; (R)-pantothenate biosynthesis; (R)-pantothenate from (R)-pantoate and beta-alanine: step 1/1.</text>
</comment>
<comment type="subunit">
    <text evidence="1">Homodimer.</text>
</comment>
<comment type="subcellular location">
    <subcellularLocation>
        <location evidence="1">Cytoplasm</location>
    </subcellularLocation>
</comment>
<comment type="miscellaneous">
    <text evidence="1">The reaction proceeds by a bi uni uni bi ping pong mechanism.</text>
</comment>
<comment type="similarity">
    <text evidence="1">Belongs to the pantothenate synthetase family.</text>
</comment>
<dbReference type="EC" id="6.3.2.1" evidence="1"/>
<dbReference type="EMBL" id="CP000269">
    <property type="protein sequence ID" value="ABR88897.1"/>
    <property type="molecule type" value="Genomic_DNA"/>
</dbReference>
<dbReference type="RefSeq" id="WP_012078962.1">
    <property type="nucleotide sequence ID" value="NC_009659.1"/>
</dbReference>
<dbReference type="SMR" id="A6SWZ8"/>
<dbReference type="STRING" id="375286.mma_1105"/>
<dbReference type="KEGG" id="mms:mma_1105"/>
<dbReference type="eggNOG" id="COG0414">
    <property type="taxonomic scope" value="Bacteria"/>
</dbReference>
<dbReference type="HOGENOM" id="CLU_047148_0_0_4"/>
<dbReference type="OrthoDB" id="9773087at2"/>
<dbReference type="UniPathway" id="UPA00028">
    <property type="reaction ID" value="UER00005"/>
</dbReference>
<dbReference type="Proteomes" id="UP000006388">
    <property type="component" value="Chromosome"/>
</dbReference>
<dbReference type="GO" id="GO:0005829">
    <property type="term" value="C:cytosol"/>
    <property type="evidence" value="ECO:0007669"/>
    <property type="project" value="TreeGrafter"/>
</dbReference>
<dbReference type="GO" id="GO:0005524">
    <property type="term" value="F:ATP binding"/>
    <property type="evidence" value="ECO:0007669"/>
    <property type="project" value="UniProtKB-KW"/>
</dbReference>
<dbReference type="GO" id="GO:0004592">
    <property type="term" value="F:pantoate-beta-alanine ligase activity"/>
    <property type="evidence" value="ECO:0007669"/>
    <property type="project" value="UniProtKB-UniRule"/>
</dbReference>
<dbReference type="GO" id="GO:0015940">
    <property type="term" value="P:pantothenate biosynthetic process"/>
    <property type="evidence" value="ECO:0007669"/>
    <property type="project" value="UniProtKB-UniRule"/>
</dbReference>
<dbReference type="CDD" id="cd00560">
    <property type="entry name" value="PanC"/>
    <property type="match status" value="1"/>
</dbReference>
<dbReference type="Gene3D" id="3.40.50.620">
    <property type="entry name" value="HUPs"/>
    <property type="match status" value="1"/>
</dbReference>
<dbReference type="Gene3D" id="3.30.1300.10">
    <property type="entry name" value="Pantoate-beta-alanine ligase, C-terminal domain"/>
    <property type="match status" value="1"/>
</dbReference>
<dbReference type="HAMAP" id="MF_00158">
    <property type="entry name" value="PanC"/>
    <property type="match status" value="1"/>
</dbReference>
<dbReference type="InterPro" id="IPR003721">
    <property type="entry name" value="Pantoate_ligase"/>
</dbReference>
<dbReference type="InterPro" id="IPR042176">
    <property type="entry name" value="Pantoate_ligase_C"/>
</dbReference>
<dbReference type="InterPro" id="IPR014729">
    <property type="entry name" value="Rossmann-like_a/b/a_fold"/>
</dbReference>
<dbReference type="NCBIfam" id="TIGR00018">
    <property type="entry name" value="panC"/>
    <property type="match status" value="1"/>
</dbReference>
<dbReference type="PANTHER" id="PTHR21299">
    <property type="entry name" value="CYTIDYLATE KINASE/PANTOATE-BETA-ALANINE LIGASE"/>
    <property type="match status" value="1"/>
</dbReference>
<dbReference type="PANTHER" id="PTHR21299:SF1">
    <property type="entry name" value="PANTOATE--BETA-ALANINE LIGASE"/>
    <property type="match status" value="1"/>
</dbReference>
<dbReference type="Pfam" id="PF02569">
    <property type="entry name" value="Pantoate_ligase"/>
    <property type="match status" value="1"/>
</dbReference>
<dbReference type="SUPFAM" id="SSF52374">
    <property type="entry name" value="Nucleotidylyl transferase"/>
    <property type="match status" value="1"/>
</dbReference>
<evidence type="ECO:0000255" key="1">
    <source>
        <dbReference type="HAMAP-Rule" id="MF_00158"/>
    </source>
</evidence>
<proteinExistence type="inferred from homology"/>
<protein>
    <recommendedName>
        <fullName evidence="1">Pantothenate synthetase</fullName>
        <shortName evidence="1">PS</shortName>
        <ecNumber evidence="1">6.3.2.1</ecNumber>
    </recommendedName>
    <alternativeName>
        <fullName evidence="1">Pantoate--beta-alanine ligase</fullName>
    </alternativeName>
    <alternativeName>
        <fullName evidence="1">Pantoate-activating enzyme</fullName>
    </alternativeName>
</protein>
<accession>A6SWZ8</accession>
<organism>
    <name type="scientific">Janthinobacterium sp. (strain Marseille)</name>
    <name type="common">Minibacterium massiliensis</name>
    <dbReference type="NCBI Taxonomy" id="375286"/>
    <lineage>
        <taxon>Bacteria</taxon>
        <taxon>Pseudomonadati</taxon>
        <taxon>Pseudomonadota</taxon>
        <taxon>Betaproteobacteria</taxon>
        <taxon>Burkholderiales</taxon>
        <taxon>Oxalobacteraceae</taxon>
        <taxon>Janthinobacterium</taxon>
    </lineage>
</organism>
<feature type="chain" id="PRO_1000097076" description="Pantothenate synthetase">
    <location>
        <begin position="1"/>
        <end position="279"/>
    </location>
</feature>
<feature type="active site" description="Proton donor" evidence="1">
    <location>
        <position position="33"/>
    </location>
</feature>
<feature type="binding site" evidence="1">
    <location>
        <begin position="26"/>
        <end position="33"/>
    </location>
    <ligand>
        <name>ATP</name>
        <dbReference type="ChEBI" id="CHEBI:30616"/>
    </ligand>
</feature>
<feature type="binding site" evidence="1">
    <location>
        <position position="57"/>
    </location>
    <ligand>
        <name>(R)-pantoate</name>
        <dbReference type="ChEBI" id="CHEBI:15980"/>
    </ligand>
</feature>
<feature type="binding site" evidence="1">
    <location>
        <position position="57"/>
    </location>
    <ligand>
        <name>beta-alanine</name>
        <dbReference type="ChEBI" id="CHEBI:57966"/>
    </ligand>
</feature>
<feature type="binding site" evidence="1">
    <location>
        <begin position="144"/>
        <end position="147"/>
    </location>
    <ligand>
        <name>ATP</name>
        <dbReference type="ChEBI" id="CHEBI:30616"/>
    </ligand>
</feature>
<feature type="binding site" evidence="1">
    <location>
        <position position="150"/>
    </location>
    <ligand>
        <name>(R)-pantoate</name>
        <dbReference type="ChEBI" id="CHEBI:15980"/>
    </ligand>
</feature>
<feature type="binding site" evidence="1">
    <location>
        <begin position="181"/>
        <end position="184"/>
    </location>
    <ligand>
        <name>ATP</name>
        <dbReference type="ChEBI" id="CHEBI:30616"/>
    </ligand>
</feature>
<name>PANC_JANMA</name>
<keyword id="KW-0067">ATP-binding</keyword>
<keyword id="KW-0963">Cytoplasm</keyword>
<keyword id="KW-0436">Ligase</keyword>
<keyword id="KW-0547">Nucleotide-binding</keyword>
<keyword id="KW-0566">Pantothenate biosynthesis</keyword>
<reference key="1">
    <citation type="journal article" date="2007" name="PLoS Genet.">
        <title>Genome analysis of Minibacterium massiliensis highlights the convergent evolution of water-living bacteria.</title>
        <authorList>
            <person name="Audic S."/>
            <person name="Robert C."/>
            <person name="Campagna B."/>
            <person name="Parinello H."/>
            <person name="Claverie J.-M."/>
            <person name="Raoult D."/>
            <person name="Drancourt M."/>
        </authorList>
    </citation>
    <scope>NUCLEOTIDE SEQUENCE [LARGE SCALE GENOMIC DNA]</scope>
    <source>
        <strain>Marseille</strain>
    </source>
</reference>